<gene>
    <name evidence="1" type="primary">rplF</name>
    <name type="ordered locus">APL_1774</name>
</gene>
<reference key="1">
    <citation type="journal article" date="2008" name="J. Bacteriol.">
        <title>The complete genome sequence of Actinobacillus pleuropneumoniae L20 (serotype 5b).</title>
        <authorList>
            <person name="Foote S.J."/>
            <person name="Bosse J.T."/>
            <person name="Bouevitch A.B."/>
            <person name="Langford P.R."/>
            <person name="Young N.M."/>
            <person name="Nash J.H.E."/>
        </authorList>
    </citation>
    <scope>NUCLEOTIDE SEQUENCE [LARGE SCALE GENOMIC DNA]</scope>
    <source>
        <strain>L20</strain>
    </source>
</reference>
<feature type="chain" id="PRO_1000055188" description="Large ribosomal subunit protein uL6">
    <location>
        <begin position="1"/>
        <end position="177"/>
    </location>
</feature>
<protein>
    <recommendedName>
        <fullName evidence="1">Large ribosomal subunit protein uL6</fullName>
    </recommendedName>
    <alternativeName>
        <fullName evidence="2">50S ribosomal protein L6</fullName>
    </alternativeName>
</protein>
<comment type="function">
    <text evidence="1">This protein binds to the 23S rRNA, and is important in its secondary structure. It is located near the subunit interface in the base of the L7/L12 stalk, and near the tRNA binding site of the peptidyltransferase center.</text>
</comment>
<comment type="subunit">
    <text evidence="1">Part of the 50S ribosomal subunit.</text>
</comment>
<comment type="similarity">
    <text evidence="1">Belongs to the universal ribosomal protein uL6 family.</text>
</comment>
<sequence>MSRVAKAPVNIPAGVEVKLNGQLLTVKGKNGELSREIHNAVEVNQDANALTFVPRTGVANADAQAGTARALVNAMVIGVTEGFTKKLQLVGVGYRAQMKGNVVALSLGYSHPIEHTLPAGVTGECPSQTEIVLKSADKQLIGQVAADIRAYRRPEPYKGKGVRYSDEVVRTKEAKKK</sequence>
<dbReference type="EMBL" id="CP000569">
    <property type="protein sequence ID" value="ABN74858.1"/>
    <property type="molecule type" value="Genomic_DNA"/>
</dbReference>
<dbReference type="RefSeq" id="WP_005599308.1">
    <property type="nucleotide sequence ID" value="NC_009053.1"/>
</dbReference>
<dbReference type="SMR" id="A3N372"/>
<dbReference type="STRING" id="416269.APL_1774"/>
<dbReference type="EnsemblBacteria" id="ABN74858">
    <property type="protein sequence ID" value="ABN74858"/>
    <property type="gene ID" value="APL_1774"/>
</dbReference>
<dbReference type="GeneID" id="48600067"/>
<dbReference type="KEGG" id="apl:APL_1774"/>
<dbReference type="eggNOG" id="COG0097">
    <property type="taxonomic scope" value="Bacteria"/>
</dbReference>
<dbReference type="HOGENOM" id="CLU_065464_1_2_6"/>
<dbReference type="Proteomes" id="UP000001432">
    <property type="component" value="Chromosome"/>
</dbReference>
<dbReference type="GO" id="GO:0022625">
    <property type="term" value="C:cytosolic large ribosomal subunit"/>
    <property type="evidence" value="ECO:0007669"/>
    <property type="project" value="TreeGrafter"/>
</dbReference>
<dbReference type="GO" id="GO:0019843">
    <property type="term" value="F:rRNA binding"/>
    <property type="evidence" value="ECO:0007669"/>
    <property type="project" value="UniProtKB-UniRule"/>
</dbReference>
<dbReference type="GO" id="GO:0003735">
    <property type="term" value="F:structural constituent of ribosome"/>
    <property type="evidence" value="ECO:0007669"/>
    <property type="project" value="InterPro"/>
</dbReference>
<dbReference type="GO" id="GO:0002181">
    <property type="term" value="P:cytoplasmic translation"/>
    <property type="evidence" value="ECO:0007669"/>
    <property type="project" value="TreeGrafter"/>
</dbReference>
<dbReference type="FunFam" id="3.90.930.12:FF:000001">
    <property type="entry name" value="50S ribosomal protein L6"/>
    <property type="match status" value="1"/>
</dbReference>
<dbReference type="FunFam" id="3.90.930.12:FF:000002">
    <property type="entry name" value="50S ribosomal protein L6"/>
    <property type="match status" value="1"/>
</dbReference>
<dbReference type="Gene3D" id="3.90.930.12">
    <property type="entry name" value="Ribosomal protein L6, alpha-beta domain"/>
    <property type="match status" value="2"/>
</dbReference>
<dbReference type="HAMAP" id="MF_01365_B">
    <property type="entry name" value="Ribosomal_uL6_B"/>
    <property type="match status" value="1"/>
</dbReference>
<dbReference type="InterPro" id="IPR000702">
    <property type="entry name" value="Ribosomal_uL6-like"/>
</dbReference>
<dbReference type="InterPro" id="IPR036789">
    <property type="entry name" value="Ribosomal_uL6-like_a/b-dom_sf"/>
</dbReference>
<dbReference type="InterPro" id="IPR020040">
    <property type="entry name" value="Ribosomal_uL6_a/b-dom"/>
</dbReference>
<dbReference type="InterPro" id="IPR019906">
    <property type="entry name" value="Ribosomal_uL6_bac-type"/>
</dbReference>
<dbReference type="InterPro" id="IPR002358">
    <property type="entry name" value="Ribosomal_uL6_CS"/>
</dbReference>
<dbReference type="NCBIfam" id="TIGR03654">
    <property type="entry name" value="L6_bact"/>
    <property type="match status" value="1"/>
</dbReference>
<dbReference type="PANTHER" id="PTHR11655">
    <property type="entry name" value="60S/50S RIBOSOMAL PROTEIN L6/L9"/>
    <property type="match status" value="1"/>
</dbReference>
<dbReference type="PANTHER" id="PTHR11655:SF14">
    <property type="entry name" value="LARGE RIBOSOMAL SUBUNIT PROTEIN UL6M"/>
    <property type="match status" value="1"/>
</dbReference>
<dbReference type="Pfam" id="PF00347">
    <property type="entry name" value="Ribosomal_L6"/>
    <property type="match status" value="2"/>
</dbReference>
<dbReference type="PIRSF" id="PIRSF002162">
    <property type="entry name" value="Ribosomal_L6"/>
    <property type="match status" value="1"/>
</dbReference>
<dbReference type="PRINTS" id="PR00059">
    <property type="entry name" value="RIBOSOMALL6"/>
</dbReference>
<dbReference type="SUPFAM" id="SSF56053">
    <property type="entry name" value="Ribosomal protein L6"/>
    <property type="match status" value="2"/>
</dbReference>
<dbReference type="PROSITE" id="PS00525">
    <property type="entry name" value="RIBOSOMAL_L6_1"/>
    <property type="match status" value="1"/>
</dbReference>
<name>RL6_ACTP2</name>
<accession>A3N372</accession>
<organism>
    <name type="scientific">Actinobacillus pleuropneumoniae serotype 5b (strain L20)</name>
    <dbReference type="NCBI Taxonomy" id="416269"/>
    <lineage>
        <taxon>Bacteria</taxon>
        <taxon>Pseudomonadati</taxon>
        <taxon>Pseudomonadota</taxon>
        <taxon>Gammaproteobacteria</taxon>
        <taxon>Pasteurellales</taxon>
        <taxon>Pasteurellaceae</taxon>
        <taxon>Actinobacillus</taxon>
    </lineage>
</organism>
<evidence type="ECO:0000255" key="1">
    <source>
        <dbReference type="HAMAP-Rule" id="MF_01365"/>
    </source>
</evidence>
<evidence type="ECO:0000305" key="2"/>
<keyword id="KW-1185">Reference proteome</keyword>
<keyword id="KW-0687">Ribonucleoprotein</keyword>
<keyword id="KW-0689">Ribosomal protein</keyword>
<keyword id="KW-0694">RNA-binding</keyword>
<keyword id="KW-0699">rRNA-binding</keyword>
<proteinExistence type="inferred from homology"/>